<keyword id="KW-1003">Cell membrane</keyword>
<keyword id="KW-0968">Cytoplasmic vesicle</keyword>
<keyword id="KW-0217">Developmental protein</keyword>
<keyword id="KW-1015">Disulfide bond</keyword>
<keyword id="KW-0256">Endoplasmic reticulum</keyword>
<keyword id="KW-0297">G-protein coupled receptor</keyword>
<keyword id="KW-0325">Glycoprotein</keyword>
<keyword id="KW-0472">Membrane</keyword>
<keyword id="KW-0524">Neurogenesis</keyword>
<keyword id="KW-0675">Receptor</keyword>
<keyword id="KW-1185">Reference proteome</keyword>
<keyword id="KW-0732">Signal</keyword>
<keyword id="KW-0807">Transducer</keyword>
<keyword id="KW-0812">Transmembrane</keyword>
<keyword id="KW-1133">Transmembrane helix</keyword>
<keyword id="KW-0832">Ubl conjugation</keyword>
<keyword id="KW-0879">Wnt signaling pathway</keyword>
<reference key="1">
    <citation type="journal article" date="2004" name="Exp. Cell Res.">
        <title>Wnt-4 activates the canonical beta-catenin-mediated Wnt pathway and binds Frizzled-6 CRD: functional implications of Wnt/beta-catenin activity in kidney epithelial cells.</title>
        <authorList>
            <person name="Lyons J.P."/>
            <person name="Mueller U.W."/>
            <person name="Ji H."/>
            <person name="Everett C."/>
            <person name="Fang X."/>
            <person name="Hsieh J.C."/>
            <person name="Barth A.M."/>
            <person name="McCrea P.D."/>
        </authorList>
    </citation>
    <scope>NUCLEOTIDE SEQUENCE [MRNA]</scope>
    <source>
        <strain>Cocker spaniel</strain>
        <tissue>Kidney</tissue>
    </source>
</reference>
<gene>
    <name type="primary">FZD6</name>
</gene>
<organism>
    <name type="scientific">Canis lupus familiaris</name>
    <name type="common">Dog</name>
    <name type="synonym">Canis familiaris</name>
    <dbReference type="NCBI Taxonomy" id="9615"/>
    <lineage>
        <taxon>Eukaryota</taxon>
        <taxon>Metazoa</taxon>
        <taxon>Chordata</taxon>
        <taxon>Craniata</taxon>
        <taxon>Vertebrata</taxon>
        <taxon>Euteleostomi</taxon>
        <taxon>Mammalia</taxon>
        <taxon>Eutheria</taxon>
        <taxon>Laurasiatheria</taxon>
        <taxon>Carnivora</taxon>
        <taxon>Caniformia</taxon>
        <taxon>Canidae</taxon>
        <taxon>Canis</taxon>
    </lineage>
</organism>
<comment type="function">
    <text evidence="2">Receptor for Wnt proteins. Most of frizzled receptors are coupled to the beta-catenin canonical signaling pathway, which leads to the activation of disheveled proteins, inhibition of GSK-3 kinase, nuclear accumulation of beta-catenin and activation of Wnt target genes. A second signaling pathway involving PKC and calcium fluxes has been seen for some family members, but it is not yet clear if it represents a distinct pathway or if it can be integrated in the canonical pathway, as PKC seems to be required for Wnt-mediated inactivation of GSK-3 kinase. Both pathways seem to involve interactions with G-proteins. Activation by Wnt5A stimulates PKC activity via a G-protein-dependent mechanism. Involved in transduction and intercellular transmission of polarity information during tissue morphogenesis and/or in differentiated tissues. Together with FZD3, is involved in the neural tube closure and plays a role in the regulation of the establishment of planar cell polarity (PCP), particularly in the orientation of asymmetric bundles of stereocilia on the apical faces of a subset of auditory and vestibular sensory cells located in the inner ear (By similarity).</text>
</comment>
<comment type="subunit">
    <text evidence="2">Interacts with LMBR1L.</text>
</comment>
<comment type="subcellular location">
    <subcellularLocation>
        <location evidence="2">Membrane</location>
        <topology evidence="3">Multi-pass membrane protein</topology>
    </subcellularLocation>
    <subcellularLocation>
        <location evidence="2">Cell membrane</location>
        <topology evidence="3">Multi-pass membrane protein</topology>
    </subcellularLocation>
    <subcellularLocation>
        <location evidence="2">Cell surface</location>
    </subcellularLocation>
    <subcellularLocation>
        <location evidence="2">Apical cell membrane</location>
        <topology evidence="3">Multi-pass membrane protein</topology>
    </subcellularLocation>
    <subcellularLocation>
        <location evidence="2">Cytoplasmic vesicle membrane</location>
        <topology evidence="3">Multi-pass membrane protein</topology>
    </subcellularLocation>
    <subcellularLocation>
        <location evidence="2">Endoplasmic reticulum membrane</location>
        <topology evidence="3">Multi-pass membrane protein</topology>
    </subcellularLocation>
    <text evidence="2">Colocalizes with FZD3 at the apical face of cells (By similarity). Localizes to the endoplasmic reticulum membrane in the presence of LMBR1L (By similarity).</text>
</comment>
<comment type="domain">
    <text evidence="1">Lys-Thr-X-X-X-Trp motif interacts with the PDZ domain of Dvl (Disheveled) family members and is involved in the activation of the Wnt/beta-catenin signaling pathway.</text>
</comment>
<comment type="domain">
    <text evidence="1">The FZ domain is involved in binding with Wnt ligands.</text>
</comment>
<comment type="PTM">
    <text evidence="1">Ubiquitinated by ZNRF3, leading to its degradation by the proteasome.</text>
</comment>
<comment type="similarity">
    <text evidence="6">Belongs to the G-protein coupled receptor Fz/Smo family.</text>
</comment>
<protein>
    <recommendedName>
        <fullName>Frizzled-6</fullName>
        <shortName>Fz-6</shortName>
    </recommendedName>
</protein>
<sequence>MEMFTFLLTCVFLPFVRGHSLFTCEPITVPRCMKMAYNMTFFPNLMRHYDQSTAAVKMEPFLPLANLECSPNIETFLCKAFVPACTDQINVVPPCRKFCEKVYSDCKKLIDTFGMRWPEELECDRLQYCDETVPVTFDPHTQFLGPQKNTEQVQRDIGFWCPRHLKTSGGQGYKFLGIDQCAPPCPNMYFKSDELEFAKSFIGIVSIFCLCATLFTFLTFLIDVKRFRYPERPIIYYSVCYSIVSLMYFIGFLLGDRTACNKADEKLELGDTVVLGSQNKACTVLFMFLYFFTMAGTVWWVILTITWFLAAGRKWSCEAIEQKAVWFHAVAWGIPGFLTVMLLAMNKVEGDNISGVCFVGLYDLDASRYFVLLPLCLCVFVGLSLLLAGIISLNHVRQVIQHDGRNQEKLKKFMIRIGVFSGLYLVPLVTLLGCYVYEQVNRITWEITWVSDHCRQYHIPCPYQAKTETRPELALFMIKYLMTLIVGISAVFWVGSKKTCTEWAGFFKRNRKRDPISESRRVLQESCEFFLKHNSKVKHKKKHYKPSSHKLKVISKSMGTSTGATANHGTSAVAITNHDYLGQETLTEIQTSPETSVREVRADGASTPRSREQDCGEPASPAASSSRLCEEQADRKGRAGNGTDKISISESTRSEGRVTPKSDVTETGPMQSSSLQVPGSSEPGSLKGSTSLLVHSASGGRKEHGTGSHSDT</sequence>
<evidence type="ECO:0000250" key="1"/>
<evidence type="ECO:0000250" key="2">
    <source>
        <dbReference type="UniProtKB" id="Q61089"/>
    </source>
</evidence>
<evidence type="ECO:0000255" key="3"/>
<evidence type="ECO:0000255" key="4">
    <source>
        <dbReference type="PROSITE-ProRule" id="PRU00090"/>
    </source>
</evidence>
<evidence type="ECO:0000256" key="5">
    <source>
        <dbReference type="SAM" id="MobiDB-lite"/>
    </source>
</evidence>
<evidence type="ECO:0000305" key="6"/>
<feature type="signal peptide" evidence="3">
    <location>
        <begin position="1"/>
        <end position="18"/>
    </location>
</feature>
<feature type="chain" id="PRO_0000012993" description="Frizzled-6">
    <location>
        <begin position="19"/>
        <end position="712"/>
    </location>
</feature>
<feature type="topological domain" description="Extracellular" evidence="3">
    <location>
        <begin position="19"/>
        <end position="201"/>
    </location>
</feature>
<feature type="transmembrane region" description="Helical; Name=1" evidence="3">
    <location>
        <begin position="202"/>
        <end position="222"/>
    </location>
</feature>
<feature type="topological domain" description="Cytoplasmic" evidence="3">
    <location>
        <begin position="223"/>
        <end position="233"/>
    </location>
</feature>
<feature type="transmembrane region" description="Helical; Name=2" evidence="3">
    <location>
        <begin position="234"/>
        <end position="254"/>
    </location>
</feature>
<feature type="topological domain" description="Extracellular" evidence="3">
    <location>
        <begin position="255"/>
        <end position="284"/>
    </location>
</feature>
<feature type="transmembrane region" description="Helical; Name=3" evidence="3">
    <location>
        <begin position="285"/>
        <end position="305"/>
    </location>
</feature>
<feature type="topological domain" description="Cytoplasmic" evidence="3">
    <location>
        <begin position="306"/>
        <end position="324"/>
    </location>
</feature>
<feature type="transmembrane region" description="Helical; Name=4" evidence="3">
    <location>
        <begin position="325"/>
        <end position="345"/>
    </location>
</feature>
<feature type="topological domain" description="Extracellular" evidence="3">
    <location>
        <begin position="346"/>
        <end position="370"/>
    </location>
</feature>
<feature type="transmembrane region" description="Helical; Name=5" evidence="3">
    <location>
        <begin position="371"/>
        <end position="391"/>
    </location>
</feature>
<feature type="topological domain" description="Cytoplasmic" evidence="3">
    <location>
        <begin position="392"/>
        <end position="416"/>
    </location>
</feature>
<feature type="transmembrane region" description="Helical; Name=6" evidence="3">
    <location>
        <begin position="417"/>
        <end position="437"/>
    </location>
</feature>
<feature type="topological domain" description="Extracellular" evidence="3">
    <location>
        <begin position="438"/>
        <end position="473"/>
    </location>
</feature>
<feature type="transmembrane region" description="Helical; Name=7" evidence="3">
    <location>
        <begin position="474"/>
        <end position="494"/>
    </location>
</feature>
<feature type="topological domain" description="Cytoplasmic" evidence="3">
    <location>
        <begin position="495"/>
        <end position="712"/>
    </location>
</feature>
<feature type="domain" description="FZ" evidence="4">
    <location>
        <begin position="19"/>
        <end position="132"/>
    </location>
</feature>
<feature type="region of interest" description="Disordered" evidence="5">
    <location>
        <begin position="588"/>
        <end position="712"/>
    </location>
</feature>
<feature type="short sequence motif" description="Lys-Thr-X-X-X-Trp motif, mediates interaction with the PDZ domain of Dvl family members" evidence="1">
    <location>
        <begin position="498"/>
        <end position="503"/>
    </location>
</feature>
<feature type="compositionally biased region" description="Basic and acidic residues" evidence="5">
    <location>
        <begin position="628"/>
        <end position="637"/>
    </location>
</feature>
<feature type="compositionally biased region" description="Basic and acidic residues" evidence="5">
    <location>
        <begin position="652"/>
        <end position="664"/>
    </location>
</feature>
<feature type="compositionally biased region" description="Polar residues" evidence="5">
    <location>
        <begin position="668"/>
        <end position="693"/>
    </location>
</feature>
<feature type="compositionally biased region" description="Basic and acidic residues" evidence="5">
    <location>
        <begin position="700"/>
        <end position="712"/>
    </location>
</feature>
<feature type="glycosylation site" description="N-linked (GlcNAc...) asparagine" evidence="3">
    <location>
        <position position="38"/>
    </location>
</feature>
<feature type="glycosylation site" description="N-linked (GlcNAc...) asparagine" evidence="3">
    <location>
        <position position="352"/>
    </location>
</feature>
<feature type="disulfide bond" evidence="4">
    <location>
        <begin position="24"/>
        <end position="85"/>
    </location>
</feature>
<feature type="disulfide bond" evidence="4">
    <location>
        <begin position="32"/>
        <end position="78"/>
    </location>
</feature>
<feature type="disulfide bond" evidence="4">
    <location>
        <begin position="69"/>
        <end position="106"/>
    </location>
</feature>
<feature type="disulfide bond" evidence="4">
    <location>
        <begin position="95"/>
        <end position="129"/>
    </location>
</feature>
<feature type="disulfide bond" evidence="4">
    <location>
        <begin position="99"/>
        <end position="123"/>
    </location>
</feature>
<accession>Q8WMU5</accession>
<proteinExistence type="evidence at transcript level"/>
<name>FZD6_CANLF</name>
<dbReference type="EMBL" id="AY052750">
    <property type="protein sequence ID" value="AAL12245.1"/>
    <property type="molecule type" value="mRNA"/>
</dbReference>
<dbReference type="RefSeq" id="NP_001003065.1">
    <property type="nucleotide sequence ID" value="NM_001003065.1"/>
</dbReference>
<dbReference type="SMR" id="Q8WMU5"/>
<dbReference type="FunCoup" id="Q8WMU5">
    <property type="interactions" value="126"/>
</dbReference>
<dbReference type="STRING" id="9615.ENSCAFP00000000924"/>
<dbReference type="GlyCosmos" id="Q8WMU5">
    <property type="glycosylation" value="2 sites, No reported glycans"/>
</dbReference>
<dbReference type="PaxDb" id="9612-ENSCAFP00000000924"/>
<dbReference type="GeneID" id="403610"/>
<dbReference type="KEGG" id="cfa:403610"/>
<dbReference type="CTD" id="8323"/>
<dbReference type="eggNOG" id="KOG3577">
    <property type="taxonomic scope" value="Eukaryota"/>
</dbReference>
<dbReference type="InParanoid" id="Q8WMU5"/>
<dbReference type="OrthoDB" id="10053709at2759"/>
<dbReference type="Proteomes" id="UP000002254">
    <property type="component" value="Unplaced"/>
</dbReference>
<dbReference type="Proteomes" id="UP000694429">
    <property type="component" value="Unplaced"/>
</dbReference>
<dbReference type="Proteomes" id="UP000694542">
    <property type="component" value="Unplaced"/>
</dbReference>
<dbReference type="Proteomes" id="UP000805418">
    <property type="component" value="Unplaced"/>
</dbReference>
<dbReference type="GO" id="GO:0016324">
    <property type="term" value="C:apical plasma membrane"/>
    <property type="evidence" value="ECO:0007669"/>
    <property type="project" value="UniProtKB-SubCell"/>
</dbReference>
<dbReference type="GO" id="GO:0009986">
    <property type="term" value="C:cell surface"/>
    <property type="evidence" value="ECO:0007669"/>
    <property type="project" value="UniProtKB-SubCell"/>
</dbReference>
<dbReference type="GO" id="GO:0030659">
    <property type="term" value="C:cytoplasmic vesicle membrane"/>
    <property type="evidence" value="ECO:0007669"/>
    <property type="project" value="UniProtKB-SubCell"/>
</dbReference>
<dbReference type="GO" id="GO:0005789">
    <property type="term" value="C:endoplasmic reticulum membrane"/>
    <property type="evidence" value="ECO:0000250"/>
    <property type="project" value="UniProtKB"/>
</dbReference>
<dbReference type="GO" id="GO:0005886">
    <property type="term" value="C:plasma membrane"/>
    <property type="evidence" value="ECO:0000314"/>
    <property type="project" value="BHF-UCL"/>
</dbReference>
<dbReference type="GO" id="GO:0004930">
    <property type="term" value="F:G protein-coupled receptor activity"/>
    <property type="evidence" value="ECO:0007669"/>
    <property type="project" value="UniProtKB-KW"/>
</dbReference>
<dbReference type="GO" id="GO:0042813">
    <property type="term" value="F:Wnt receptor activity"/>
    <property type="evidence" value="ECO:0000318"/>
    <property type="project" value="GO_Central"/>
</dbReference>
<dbReference type="GO" id="GO:0017147">
    <property type="term" value="F:Wnt-protein binding"/>
    <property type="evidence" value="ECO:0000318"/>
    <property type="project" value="GO_Central"/>
</dbReference>
<dbReference type="GO" id="GO:0060070">
    <property type="term" value="P:canonical Wnt signaling pathway"/>
    <property type="evidence" value="ECO:0000318"/>
    <property type="project" value="GO_Central"/>
</dbReference>
<dbReference type="GO" id="GO:0007399">
    <property type="term" value="P:nervous system development"/>
    <property type="evidence" value="ECO:0007669"/>
    <property type="project" value="UniProtKB-KW"/>
</dbReference>
<dbReference type="GO" id="GO:0035567">
    <property type="term" value="P:non-canonical Wnt signaling pathway"/>
    <property type="evidence" value="ECO:0000318"/>
    <property type="project" value="GO_Central"/>
</dbReference>
<dbReference type="CDD" id="cd15032">
    <property type="entry name" value="7tmF_FZD6"/>
    <property type="match status" value="1"/>
</dbReference>
<dbReference type="CDD" id="cd07450">
    <property type="entry name" value="CRD_FZ6"/>
    <property type="match status" value="1"/>
</dbReference>
<dbReference type="FunFam" id="1.20.1070.10:FF:000036">
    <property type="entry name" value="frizzled-3 isoform X1"/>
    <property type="match status" value="1"/>
</dbReference>
<dbReference type="FunFam" id="1.10.2000.10:FF:000014">
    <property type="entry name" value="frizzled-6 isoform X1"/>
    <property type="match status" value="1"/>
</dbReference>
<dbReference type="Gene3D" id="1.10.2000.10">
    <property type="entry name" value="Frizzled cysteine-rich domain"/>
    <property type="match status" value="1"/>
</dbReference>
<dbReference type="Gene3D" id="1.20.1070.10">
    <property type="entry name" value="Rhodopsin 7-helix transmembrane proteins"/>
    <property type="match status" value="1"/>
</dbReference>
<dbReference type="InterPro" id="IPR015526">
    <property type="entry name" value="Frizzled/SFRP"/>
</dbReference>
<dbReference type="InterPro" id="IPR000539">
    <property type="entry name" value="Frizzled/Smoothened_7TM"/>
</dbReference>
<dbReference type="InterPro" id="IPR020067">
    <property type="entry name" value="Frizzled_dom"/>
</dbReference>
<dbReference type="InterPro" id="IPR036790">
    <property type="entry name" value="Frizzled_dom_sf"/>
</dbReference>
<dbReference type="InterPro" id="IPR041770">
    <property type="entry name" value="FZ6_CRD"/>
</dbReference>
<dbReference type="InterPro" id="IPR026543">
    <property type="entry name" value="FZD6_7TM"/>
</dbReference>
<dbReference type="InterPro" id="IPR017981">
    <property type="entry name" value="GPCR_2-like_7TM"/>
</dbReference>
<dbReference type="PANTHER" id="PTHR11309">
    <property type="entry name" value="FRIZZLED"/>
    <property type="match status" value="1"/>
</dbReference>
<dbReference type="PANTHER" id="PTHR11309:SF75">
    <property type="entry name" value="FRIZZLED-6"/>
    <property type="match status" value="1"/>
</dbReference>
<dbReference type="Pfam" id="PF01534">
    <property type="entry name" value="Frizzled"/>
    <property type="match status" value="1"/>
</dbReference>
<dbReference type="Pfam" id="PF01392">
    <property type="entry name" value="Fz"/>
    <property type="match status" value="1"/>
</dbReference>
<dbReference type="PRINTS" id="PR00489">
    <property type="entry name" value="FRIZZLED"/>
</dbReference>
<dbReference type="SMART" id="SM00063">
    <property type="entry name" value="FRI"/>
    <property type="match status" value="1"/>
</dbReference>
<dbReference type="SMART" id="SM01330">
    <property type="entry name" value="Frizzled"/>
    <property type="match status" value="1"/>
</dbReference>
<dbReference type="SUPFAM" id="SSF63501">
    <property type="entry name" value="Frizzled cysteine-rich domain"/>
    <property type="match status" value="1"/>
</dbReference>
<dbReference type="PROSITE" id="PS50038">
    <property type="entry name" value="FZ"/>
    <property type="match status" value="1"/>
</dbReference>
<dbReference type="PROSITE" id="PS50261">
    <property type="entry name" value="G_PROTEIN_RECEP_F2_4"/>
    <property type="match status" value="1"/>
</dbReference>